<proteinExistence type="inferred from homology"/>
<evidence type="ECO:0000255" key="1">
    <source>
        <dbReference type="HAMAP-Rule" id="MF_00577"/>
    </source>
</evidence>
<gene>
    <name evidence="1" type="primary">hutU</name>
    <name type="ordered locus">Shewana3_0100</name>
</gene>
<comment type="function">
    <text evidence="1">Catalyzes the conversion of urocanate to 4-imidazolone-5-propionate.</text>
</comment>
<comment type="catalytic activity">
    <reaction evidence="1">
        <text>4-imidazolone-5-propanoate = trans-urocanate + H2O</text>
        <dbReference type="Rhea" id="RHEA:13101"/>
        <dbReference type="ChEBI" id="CHEBI:15377"/>
        <dbReference type="ChEBI" id="CHEBI:17771"/>
        <dbReference type="ChEBI" id="CHEBI:77893"/>
        <dbReference type="EC" id="4.2.1.49"/>
    </reaction>
</comment>
<comment type="cofactor">
    <cofactor evidence="1">
        <name>NAD(+)</name>
        <dbReference type="ChEBI" id="CHEBI:57540"/>
    </cofactor>
    <text evidence="1">Binds 1 NAD(+) per subunit.</text>
</comment>
<comment type="pathway">
    <text evidence="1">Amino-acid degradation; L-histidine degradation into L-glutamate; N-formimidoyl-L-glutamate from L-histidine: step 2/3.</text>
</comment>
<comment type="subcellular location">
    <subcellularLocation>
        <location evidence="1">Cytoplasm</location>
    </subcellularLocation>
</comment>
<comment type="similarity">
    <text evidence="1">Belongs to the urocanase family.</text>
</comment>
<sequence length="556" mass="60287">MDKRHDSSRRIIAPHGSQLSCKSWLTEAPMRMLMNNLHPDVAERPEDLVVYGGIGRAARDWDCYDKIIEVLKRLEDDETLMVQSGKPVGVFRTHADAPRVLIANSNLVPHWANWEHFNELDKQGLAMYGQMTAGSWIYIGTQGIVQGTYETFVAVAKQHFGGVAAGKWILTGGLGGMGGAQTLAGTMAGFSVLACEVDETRIDFRLRTRYVDKKATSLDEALAMINDANASGKPVSVGLLANAADVFAELVKRGITPDVVTDQTSAHDPLNGYLPQGWTMAQAADMRKTDEAAVVKAAKASMAVQVQAMLELQAAGAATLDYGNNIRQMAFETGVKNAFDFPGFVPAYIRPLFCEGIGPFRWVALSGDPEDIYKTDAKVKELIPDNPHLHNWLDMARERIAFQGLPARICWVGLKDRARLAQAFNEMVKNGELSAPIVIGRDHLDSGSVASPNRETESMMDGSDAVSDWPLLNALLNTASGATWVSLHHGGGVGMGFSQHSGVVIVCDGTEAAAKRVGRVLWNDPATGVMRHADAGYEIAKNCAKEQGLDLPMLKD</sequence>
<reference key="1">
    <citation type="submission" date="2006-09" db="EMBL/GenBank/DDBJ databases">
        <title>Complete sequence of chromosome 1 of Shewanella sp. ANA-3.</title>
        <authorList>
            <person name="Copeland A."/>
            <person name="Lucas S."/>
            <person name="Lapidus A."/>
            <person name="Barry K."/>
            <person name="Detter J.C."/>
            <person name="Glavina del Rio T."/>
            <person name="Hammon N."/>
            <person name="Israni S."/>
            <person name="Dalin E."/>
            <person name="Tice H."/>
            <person name="Pitluck S."/>
            <person name="Chertkov O."/>
            <person name="Brettin T."/>
            <person name="Bruce D."/>
            <person name="Han C."/>
            <person name="Tapia R."/>
            <person name="Gilna P."/>
            <person name="Schmutz J."/>
            <person name="Larimer F."/>
            <person name="Land M."/>
            <person name="Hauser L."/>
            <person name="Kyrpides N."/>
            <person name="Kim E."/>
            <person name="Newman D."/>
            <person name="Salticov C."/>
            <person name="Konstantinidis K."/>
            <person name="Klappenback J."/>
            <person name="Tiedje J."/>
            <person name="Richardson P."/>
        </authorList>
    </citation>
    <scope>NUCLEOTIDE SEQUENCE [LARGE SCALE GENOMIC DNA]</scope>
    <source>
        <strain>ANA-3</strain>
    </source>
</reference>
<accession>A0KRC6</accession>
<keyword id="KW-0963">Cytoplasm</keyword>
<keyword id="KW-0369">Histidine metabolism</keyword>
<keyword id="KW-0456">Lyase</keyword>
<keyword id="KW-0520">NAD</keyword>
<dbReference type="EC" id="4.2.1.49" evidence="1"/>
<dbReference type="EMBL" id="CP000469">
    <property type="protein sequence ID" value="ABK46345.1"/>
    <property type="molecule type" value="Genomic_DNA"/>
</dbReference>
<dbReference type="RefSeq" id="WP_011715379.1">
    <property type="nucleotide sequence ID" value="NC_008577.1"/>
</dbReference>
<dbReference type="SMR" id="A0KRC6"/>
<dbReference type="STRING" id="94122.Shewana3_0100"/>
<dbReference type="KEGG" id="shn:Shewana3_0100"/>
<dbReference type="eggNOG" id="COG2987">
    <property type="taxonomic scope" value="Bacteria"/>
</dbReference>
<dbReference type="HOGENOM" id="CLU_018868_0_1_6"/>
<dbReference type="OrthoDB" id="9764874at2"/>
<dbReference type="UniPathway" id="UPA00379">
    <property type="reaction ID" value="UER00550"/>
</dbReference>
<dbReference type="Proteomes" id="UP000002589">
    <property type="component" value="Chromosome"/>
</dbReference>
<dbReference type="GO" id="GO:0005737">
    <property type="term" value="C:cytoplasm"/>
    <property type="evidence" value="ECO:0007669"/>
    <property type="project" value="UniProtKB-SubCell"/>
</dbReference>
<dbReference type="GO" id="GO:0016153">
    <property type="term" value="F:urocanate hydratase activity"/>
    <property type="evidence" value="ECO:0007669"/>
    <property type="project" value="UniProtKB-UniRule"/>
</dbReference>
<dbReference type="GO" id="GO:0019556">
    <property type="term" value="P:L-histidine catabolic process to glutamate and formamide"/>
    <property type="evidence" value="ECO:0007669"/>
    <property type="project" value="UniProtKB-UniPathway"/>
</dbReference>
<dbReference type="GO" id="GO:0019557">
    <property type="term" value="P:L-histidine catabolic process to glutamate and formate"/>
    <property type="evidence" value="ECO:0007669"/>
    <property type="project" value="UniProtKB-UniPathway"/>
</dbReference>
<dbReference type="FunFam" id="3.40.50.10730:FF:000001">
    <property type="entry name" value="Urocanate hydratase"/>
    <property type="match status" value="1"/>
</dbReference>
<dbReference type="Gene3D" id="3.40.50.10730">
    <property type="entry name" value="Urocanase like domains"/>
    <property type="match status" value="1"/>
</dbReference>
<dbReference type="Gene3D" id="3.40.1770.10">
    <property type="entry name" value="Urocanase superfamily"/>
    <property type="match status" value="1"/>
</dbReference>
<dbReference type="HAMAP" id="MF_00577">
    <property type="entry name" value="HutU"/>
    <property type="match status" value="1"/>
</dbReference>
<dbReference type="InterPro" id="IPR055351">
    <property type="entry name" value="Urocanase"/>
</dbReference>
<dbReference type="InterPro" id="IPR023637">
    <property type="entry name" value="Urocanase-like"/>
</dbReference>
<dbReference type="InterPro" id="IPR035401">
    <property type="entry name" value="Urocanase_C"/>
</dbReference>
<dbReference type="InterPro" id="IPR038364">
    <property type="entry name" value="Urocanase_central_sf"/>
</dbReference>
<dbReference type="InterPro" id="IPR023636">
    <property type="entry name" value="Urocanase_CS"/>
</dbReference>
<dbReference type="InterPro" id="IPR035400">
    <property type="entry name" value="Urocanase_N"/>
</dbReference>
<dbReference type="InterPro" id="IPR035085">
    <property type="entry name" value="Urocanase_Rossmann-like"/>
</dbReference>
<dbReference type="InterPro" id="IPR036190">
    <property type="entry name" value="Urocanase_sf"/>
</dbReference>
<dbReference type="NCBIfam" id="TIGR01228">
    <property type="entry name" value="hutU"/>
    <property type="match status" value="1"/>
</dbReference>
<dbReference type="NCBIfam" id="NF003820">
    <property type="entry name" value="PRK05414.1"/>
    <property type="match status" value="1"/>
</dbReference>
<dbReference type="PANTHER" id="PTHR12216">
    <property type="entry name" value="UROCANATE HYDRATASE"/>
    <property type="match status" value="1"/>
</dbReference>
<dbReference type="PANTHER" id="PTHR12216:SF4">
    <property type="entry name" value="UROCANATE HYDRATASE"/>
    <property type="match status" value="1"/>
</dbReference>
<dbReference type="Pfam" id="PF01175">
    <property type="entry name" value="Urocanase"/>
    <property type="match status" value="1"/>
</dbReference>
<dbReference type="Pfam" id="PF17392">
    <property type="entry name" value="Urocanase_C"/>
    <property type="match status" value="1"/>
</dbReference>
<dbReference type="Pfam" id="PF17391">
    <property type="entry name" value="Urocanase_N"/>
    <property type="match status" value="1"/>
</dbReference>
<dbReference type="PIRSF" id="PIRSF001423">
    <property type="entry name" value="Urocanate_hydrat"/>
    <property type="match status" value="1"/>
</dbReference>
<dbReference type="SUPFAM" id="SSF111326">
    <property type="entry name" value="Urocanase"/>
    <property type="match status" value="1"/>
</dbReference>
<dbReference type="PROSITE" id="PS01233">
    <property type="entry name" value="UROCANASE"/>
    <property type="match status" value="1"/>
</dbReference>
<protein>
    <recommendedName>
        <fullName evidence="1">Urocanate hydratase</fullName>
        <shortName evidence="1">Urocanase</shortName>
        <ecNumber evidence="1">4.2.1.49</ecNumber>
    </recommendedName>
    <alternativeName>
        <fullName evidence="1">Imidazolonepropionate hydrolase</fullName>
    </alternativeName>
</protein>
<name>HUTU_SHESA</name>
<feature type="chain" id="PRO_1000025152" description="Urocanate hydratase">
    <location>
        <begin position="1"/>
        <end position="556"/>
    </location>
</feature>
<feature type="active site" evidence="1">
    <location>
        <position position="410"/>
    </location>
</feature>
<feature type="binding site" evidence="1">
    <location>
        <begin position="52"/>
        <end position="53"/>
    </location>
    <ligand>
        <name>NAD(+)</name>
        <dbReference type="ChEBI" id="CHEBI:57540"/>
    </ligand>
</feature>
<feature type="binding site" evidence="1">
    <location>
        <position position="130"/>
    </location>
    <ligand>
        <name>NAD(+)</name>
        <dbReference type="ChEBI" id="CHEBI:57540"/>
    </ligand>
</feature>
<feature type="binding site" evidence="1">
    <location>
        <begin position="176"/>
        <end position="178"/>
    </location>
    <ligand>
        <name>NAD(+)</name>
        <dbReference type="ChEBI" id="CHEBI:57540"/>
    </ligand>
</feature>
<feature type="binding site" evidence="1">
    <location>
        <position position="196"/>
    </location>
    <ligand>
        <name>NAD(+)</name>
        <dbReference type="ChEBI" id="CHEBI:57540"/>
    </ligand>
</feature>
<feature type="binding site" evidence="1">
    <location>
        <position position="201"/>
    </location>
    <ligand>
        <name>NAD(+)</name>
        <dbReference type="ChEBI" id="CHEBI:57540"/>
    </ligand>
</feature>
<feature type="binding site" evidence="1">
    <location>
        <begin position="242"/>
        <end position="243"/>
    </location>
    <ligand>
        <name>NAD(+)</name>
        <dbReference type="ChEBI" id="CHEBI:57540"/>
    </ligand>
</feature>
<feature type="binding site" evidence="1">
    <location>
        <begin position="263"/>
        <end position="267"/>
    </location>
    <ligand>
        <name>NAD(+)</name>
        <dbReference type="ChEBI" id="CHEBI:57540"/>
    </ligand>
</feature>
<feature type="binding site" evidence="1">
    <location>
        <begin position="273"/>
        <end position="274"/>
    </location>
    <ligand>
        <name>NAD(+)</name>
        <dbReference type="ChEBI" id="CHEBI:57540"/>
    </ligand>
</feature>
<feature type="binding site" evidence="1">
    <location>
        <position position="322"/>
    </location>
    <ligand>
        <name>NAD(+)</name>
        <dbReference type="ChEBI" id="CHEBI:57540"/>
    </ligand>
</feature>
<feature type="binding site" evidence="1">
    <location>
        <position position="492"/>
    </location>
    <ligand>
        <name>NAD(+)</name>
        <dbReference type="ChEBI" id="CHEBI:57540"/>
    </ligand>
</feature>
<organism>
    <name type="scientific">Shewanella sp. (strain ANA-3)</name>
    <dbReference type="NCBI Taxonomy" id="94122"/>
    <lineage>
        <taxon>Bacteria</taxon>
        <taxon>Pseudomonadati</taxon>
        <taxon>Pseudomonadota</taxon>
        <taxon>Gammaproteobacteria</taxon>
        <taxon>Alteromonadales</taxon>
        <taxon>Shewanellaceae</taxon>
        <taxon>Shewanella</taxon>
    </lineage>
</organism>